<gene>
    <name type="ordered locus">PM0909</name>
</gene>
<name>Y909_PASMU</name>
<reference key="1">
    <citation type="journal article" date="2001" name="Proc. Natl. Acad. Sci. U.S.A.">
        <title>Complete genomic sequence of Pasteurella multocida Pm70.</title>
        <authorList>
            <person name="May B.J."/>
            <person name="Zhang Q."/>
            <person name="Li L.L."/>
            <person name="Paustian M.L."/>
            <person name="Whittam T.S."/>
            <person name="Kapur V."/>
        </authorList>
    </citation>
    <scope>NUCLEOTIDE SEQUENCE [LARGE SCALE GENOMIC DNA]</scope>
    <source>
        <strain>Pm70</strain>
    </source>
</reference>
<accession>Q9CMC3</accession>
<sequence>MNEKRLFTEAQTENEAVDFTPKREFHGEMHIEKDEPVIEDRFVEQTFEHIVQPRSRWWKTGLALTALLFCFAVIAQSIQWLVDTWQQNQWIYFVFSLVTCLVVLLGVSSLGKEWLRLVKLKKRLSLQQKSQQILRESAVNLGQDFCAEKHQQIKALCTEMAQMLKLSSEDPGLIQWQNQLHDAYSAQEVAHLFSQTVLHPFDVQIKKLISKSALEAAVIVAVSPLAVIDMFFLSWRNIRLVNQIAQIYGIELGYWSRLRLLKMVLLNLAFAGATEVVQDIGLDWLSQDLTAKLSARAAQGIGVGLLTARLGIKAMEFCRPLAFQAGEKPRLNHIQQELLGQLRSTFFRSNKTKVKQQV</sequence>
<feature type="chain" id="PRO_0000214177" description="UPF0283 membrane protein PM0909">
    <location>
        <begin position="1"/>
        <end position="358"/>
    </location>
</feature>
<feature type="transmembrane region" description="Helical" evidence="1">
    <location>
        <begin position="62"/>
        <end position="82"/>
    </location>
</feature>
<feature type="transmembrane region" description="Helical" evidence="1">
    <location>
        <begin position="90"/>
        <end position="110"/>
    </location>
</feature>
<feature type="transmembrane region" description="Helical" evidence="1">
    <location>
        <begin position="213"/>
        <end position="233"/>
    </location>
</feature>
<comment type="subcellular location">
    <subcellularLocation>
        <location evidence="1">Cell inner membrane</location>
        <topology evidence="1">Multi-pass membrane protein</topology>
    </subcellularLocation>
</comment>
<comment type="similarity">
    <text evidence="1">Belongs to the UPF0283 family.</text>
</comment>
<dbReference type="EMBL" id="AE004439">
    <property type="protein sequence ID" value="AAK02993.1"/>
    <property type="molecule type" value="Genomic_DNA"/>
</dbReference>
<dbReference type="RefSeq" id="WP_010906913.1">
    <property type="nucleotide sequence ID" value="NC_002663.1"/>
</dbReference>
<dbReference type="SMR" id="Q9CMC3"/>
<dbReference type="STRING" id="272843.PM0909"/>
<dbReference type="EnsemblBacteria" id="AAK02993">
    <property type="protein sequence ID" value="AAK02993"/>
    <property type="gene ID" value="PM0909"/>
</dbReference>
<dbReference type="KEGG" id="pmu:PM0909"/>
<dbReference type="PATRIC" id="fig|272843.6.peg.919"/>
<dbReference type="HOGENOM" id="CLU_057693_2_0_6"/>
<dbReference type="OrthoDB" id="958025at2"/>
<dbReference type="Proteomes" id="UP000000809">
    <property type="component" value="Chromosome"/>
</dbReference>
<dbReference type="GO" id="GO:0005886">
    <property type="term" value="C:plasma membrane"/>
    <property type="evidence" value="ECO:0007669"/>
    <property type="project" value="UniProtKB-SubCell"/>
</dbReference>
<dbReference type="HAMAP" id="MF_01085">
    <property type="entry name" value="UPF0283"/>
    <property type="match status" value="1"/>
</dbReference>
<dbReference type="InterPro" id="IPR021147">
    <property type="entry name" value="DUF697"/>
</dbReference>
<dbReference type="InterPro" id="IPR006507">
    <property type="entry name" value="UPF0283"/>
</dbReference>
<dbReference type="NCBIfam" id="TIGR01620">
    <property type="entry name" value="hyp_HI0043"/>
    <property type="match status" value="1"/>
</dbReference>
<dbReference type="PANTHER" id="PTHR39342">
    <property type="entry name" value="UPF0283 MEMBRANE PROTEIN YCJF"/>
    <property type="match status" value="1"/>
</dbReference>
<dbReference type="PANTHER" id="PTHR39342:SF1">
    <property type="entry name" value="UPF0283 MEMBRANE PROTEIN YCJF"/>
    <property type="match status" value="1"/>
</dbReference>
<dbReference type="Pfam" id="PF05128">
    <property type="entry name" value="DUF697"/>
    <property type="match status" value="1"/>
</dbReference>
<proteinExistence type="inferred from homology"/>
<evidence type="ECO:0000255" key="1">
    <source>
        <dbReference type="HAMAP-Rule" id="MF_01085"/>
    </source>
</evidence>
<organism>
    <name type="scientific">Pasteurella multocida (strain Pm70)</name>
    <dbReference type="NCBI Taxonomy" id="272843"/>
    <lineage>
        <taxon>Bacteria</taxon>
        <taxon>Pseudomonadati</taxon>
        <taxon>Pseudomonadota</taxon>
        <taxon>Gammaproteobacteria</taxon>
        <taxon>Pasteurellales</taxon>
        <taxon>Pasteurellaceae</taxon>
        <taxon>Pasteurella</taxon>
    </lineage>
</organism>
<keyword id="KW-0997">Cell inner membrane</keyword>
<keyword id="KW-1003">Cell membrane</keyword>
<keyword id="KW-0472">Membrane</keyword>
<keyword id="KW-1185">Reference proteome</keyword>
<keyword id="KW-0812">Transmembrane</keyword>
<keyword id="KW-1133">Transmembrane helix</keyword>
<protein>
    <recommendedName>
        <fullName evidence="1">UPF0283 membrane protein PM0909</fullName>
    </recommendedName>
</protein>